<proteinExistence type="inferred from homology"/>
<reference key="1">
    <citation type="submission" date="2005-10" db="EMBL/GenBank/DDBJ databases">
        <title>Complete sequence of chromosome 1 of Burkholderia sp. 383.</title>
        <authorList>
            <consortium name="US DOE Joint Genome Institute"/>
            <person name="Copeland A."/>
            <person name="Lucas S."/>
            <person name="Lapidus A."/>
            <person name="Barry K."/>
            <person name="Detter J.C."/>
            <person name="Glavina T."/>
            <person name="Hammon N."/>
            <person name="Israni S."/>
            <person name="Pitluck S."/>
            <person name="Chain P."/>
            <person name="Malfatti S."/>
            <person name="Shin M."/>
            <person name="Vergez L."/>
            <person name="Schmutz J."/>
            <person name="Larimer F."/>
            <person name="Land M."/>
            <person name="Kyrpides N."/>
            <person name="Lykidis A."/>
            <person name="Richardson P."/>
        </authorList>
    </citation>
    <scope>NUCLEOTIDE SEQUENCE [LARGE SCALE GENOMIC DNA]</scope>
    <source>
        <strain>ATCC 17760 / DSM 23089 / LMG 22485 / NCIMB 9086 / R18194 / 383</strain>
    </source>
</reference>
<accession>Q39FP9</accession>
<dbReference type="EC" id="2.1.1.77" evidence="1"/>
<dbReference type="EMBL" id="CP000151">
    <property type="protein sequence ID" value="ABB08717.1"/>
    <property type="molecule type" value="Genomic_DNA"/>
</dbReference>
<dbReference type="RefSeq" id="WP_011352272.1">
    <property type="nucleotide sequence ID" value="NC_007510.1"/>
</dbReference>
<dbReference type="SMR" id="Q39FP9"/>
<dbReference type="GeneID" id="45094999"/>
<dbReference type="KEGG" id="bur:Bcep18194_A5123"/>
<dbReference type="PATRIC" id="fig|482957.22.peg.2061"/>
<dbReference type="HOGENOM" id="CLU_055432_1_0_4"/>
<dbReference type="Proteomes" id="UP000002705">
    <property type="component" value="Chromosome 1"/>
</dbReference>
<dbReference type="GO" id="GO:0005737">
    <property type="term" value="C:cytoplasm"/>
    <property type="evidence" value="ECO:0007669"/>
    <property type="project" value="UniProtKB-SubCell"/>
</dbReference>
<dbReference type="GO" id="GO:0004719">
    <property type="term" value="F:protein-L-isoaspartate (D-aspartate) O-methyltransferase activity"/>
    <property type="evidence" value="ECO:0007669"/>
    <property type="project" value="UniProtKB-UniRule"/>
</dbReference>
<dbReference type="GO" id="GO:0032259">
    <property type="term" value="P:methylation"/>
    <property type="evidence" value="ECO:0007669"/>
    <property type="project" value="UniProtKB-KW"/>
</dbReference>
<dbReference type="GO" id="GO:0036211">
    <property type="term" value="P:protein modification process"/>
    <property type="evidence" value="ECO:0007669"/>
    <property type="project" value="UniProtKB-UniRule"/>
</dbReference>
<dbReference type="GO" id="GO:0030091">
    <property type="term" value="P:protein repair"/>
    <property type="evidence" value="ECO:0007669"/>
    <property type="project" value="UniProtKB-UniRule"/>
</dbReference>
<dbReference type="CDD" id="cd02440">
    <property type="entry name" value="AdoMet_MTases"/>
    <property type="match status" value="1"/>
</dbReference>
<dbReference type="FunFam" id="3.40.50.150:FF:000010">
    <property type="entry name" value="Protein-L-isoaspartate O-methyltransferase"/>
    <property type="match status" value="1"/>
</dbReference>
<dbReference type="Gene3D" id="3.40.50.150">
    <property type="entry name" value="Vaccinia Virus protein VP39"/>
    <property type="match status" value="1"/>
</dbReference>
<dbReference type="HAMAP" id="MF_00090">
    <property type="entry name" value="PIMT"/>
    <property type="match status" value="1"/>
</dbReference>
<dbReference type="InterPro" id="IPR000682">
    <property type="entry name" value="PCMT"/>
</dbReference>
<dbReference type="InterPro" id="IPR029063">
    <property type="entry name" value="SAM-dependent_MTases_sf"/>
</dbReference>
<dbReference type="NCBIfam" id="TIGR00080">
    <property type="entry name" value="pimt"/>
    <property type="match status" value="1"/>
</dbReference>
<dbReference type="NCBIfam" id="NF001453">
    <property type="entry name" value="PRK00312.1"/>
    <property type="match status" value="1"/>
</dbReference>
<dbReference type="PANTHER" id="PTHR11579">
    <property type="entry name" value="PROTEIN-L-ISOASPARTATE O-METHYLTRANSFERASE"/>
    <property type="match status" value="1"/>
</dbReference>
<dbReference type="PANTHER" id="PTHR11579:SF0">
    <property type="entry name" value="PROTEIN-L-ISOASPARTATE(D-ASPARTATE) O-METHYLTRANSFERASE"/>
    <property type="match status" value="1"/>
</dbReference>
<dbReference type="Pfam" id="PF01135">
    <property type="entry name" value="PCMT"/>
    <property type="match status" value="1"/>
</dbReference>
<dbReference type="SUPFAM" id="SSF53335">
    <property type="entry name" value="S-adenosyl-L-methionine-dependent methyltransferases"/>
    <property type="match status" value="1"/>
</dbReference>
<dbReference type="PROSITE" id="PS01279">
    <property type="entry name" value="PCMT"/>
    <property type="match status" value="1"/>
</dbReference>
<feature type="chain" id="PRO_0000351838" description="Protein-L-isoaspartate O-methyltransferase">
    <location>
        <begin position="1"/>
        <end position="310"/>
    </location>
</feature>
<feature type="region of interest" description="Disordered" evidence="2">
    <location>
        <begin position="1"/>
        <end position="42"/>
    </location>
</feature>
<feature type="region of interest" description="Disordered" evidence="2">
    <location>
        <begin position="64"/>
        <end position="90"/>
    </location>
</feature>
<feature type="compositionally biased region" description="Basic and acidic residues" evidence="2">
    <location>
        <begin position="14"/>
        <end position="32"/>
    </location>
</feature>
<feature type="compositionally biased region" description="Low complexity" evidence="2">
    <location>
        <begin position="64"/>
        <end position="81"/>
    </location>
</feature>
<feature type="active site" evidence="1">
    <location>
        <position position="157"/>
    </location>
</feature>
<keyword id="KW-0963">Cytoplasm</keyword>
<keyword id="KW-0489">Methyltransferase</keyword>
<keyword id="KW-0949">S-adenosyl-L-methionine</keyword>
<keyword id="KW-0808">Transferase</keyword>
<sequence>MSGERAKRFPLALEDLKRAPRKSEGRAGERHAAVAGSKAADKPAAVLKPVAVKPAAVRTALPGSAAAKPATAPKPTALKPAMPKPAAPSVAPAGAFALTSERVRERMVERLRANGVTDARVLEAMAAVPRHMFVDPGLATQAYEDSALPIGHQQTISKPSVVARMIELAMAGRTLERVLEIGTGCGYQAAVLSHVARDVYSIERIKPLYERAKLNLRPLRVPNIRLHYGDGRVGLPSAAPFDAIVIAAAGLDVPQALLEQLAIGGRLVAPVGAQSGQHQVLTLVERVAHAQWRESRLDRVFFVPLKSGVI</sequence>
<organism>
    <name type="scientific">Burkholderia lata (strain ATCC 17760 / DSM 23089 / LMG 22485 / NCIMB 9086 / R18194 / 383)</name>
    <dbReference type="NCBI Taxonomy" id="482957"/>
    <lineage>
        <taxon>Bacteria</taxon>
        <taxon>Pseudomonadati</taxon>
        <taxon>Pseudomonadota</taxon>
        <taxon>Betaproteobacteria</taxon>
        <taxon>Burkholderiales</taxon>
        <taxon>Burkholderiaceae</taxon>
        <taxon>Burkholderia</taxon>
        <taxon>Burkholderia cepacia complex</taxon>
    </lineage>
</organism>
<gene>
    <name evidence="1" type="primary">pcm</name>
    <name type="ordered locus">Bcep18194_A5123</name>
</gene>
<comment type="function">
    <text evidence="1">Catalyzes the methyl esterification of L-isoaspartyl residues in peptides and proteins that result from spontaneous decomposition of normal L-aspartyl and L-asparaginyl residues. It plays a role in the repair and/or degradation of damaged proteins.</text>
</comment>
<comment type="catalytic activity">
    <reaction evidence="1">
        <text>[protein]-L-isoaspartate + S-adenosyl-L-methionine = [protein]-L-isoaspartate alpha-methyl ester + S-adenosyl-L-homocysteine</text>
        <dbReference type="Rhea" id="RHEA:12705"/>
        <dbReference type="Rhea" id="RHEA-COMP:12143"/>
        <dbReference type="Rhea" id="RHEA-COMP:12144"/>
        <dbReference type="ChEBI" id="CHEBI:57856"/>
        <dbReference type="ChEBI" id="CHEBI:59789"/>
        <dbReference type="ChEBI" id="CHEBI:90596"/>
        <dbReference type="ChEBI" id="CHEBI:90598"/>
        <dbReference type="EC" id="2.1.1.77"/>
    </reaction>
</comment>
<comment type="subcellular location">
    <subcellularLocation>
        <location evidence="1">Cytoplasm</location>
    </subcellularLocation>
</comment>
<comment type="similarity">
    <text evidence="1">Belongs to the methyltransferase superfamily. L-isoaspartyl/D-aspartyl protein methyltransferase family.</text>
</comment>
<name>PIMT_BURL3</name>
<evidence type="ECO:0000255" key="1">
    <source>
        <dbReference type="HAMAP-Rule" id="MF_00090"/>
    </source>
</evidence>
<evidence type="ECO:0000256" key="2">
    <source>
        <dbReference type="SAM" id="MobiDB-lite"/>
    </source>
</evidence>
<protein>
    <recommendedName>
        <fullName evidence="1">Protein-L-isoaspartate O-methyltransferase</fullName>
        <ecNumber evidence="1">2.1.1.77</ecNumber>
    </recommendedName>
    <alternativeName>
        <fullName evidence="1">L-isoaspartyl protein carboxyl methyltransferase</fullName>
    </alternativeName>
    <alternativeName>
        <fullName evidence="1">Protein L-isoaspartyl methyltransferase</fullName>
    </alternativeName>
    <alternativeName>
        <fullName evidence="1">Protein-beta-aspartate methyltransferase</fullName>
        <shortName evidence="1">PIMT</shortName>
    </alternativeName>
</protein>